<accession>B3GXV4</accession>
<sequence>MKTRYSVLSVAMTAAFYTQYAQADLREQCLLGVPHFQGEEVTGDQIMMPIEIEADNAVINQPKDATYTGDVAIKQGNRSLFADEVRVEQNGEQERRAFLKGSYRYQDNLIQAHGRDAAMDLGSETAELQNTEFQLVGRQGRGTAESGSFNHNKRILKNATFTACLPNDNAWSIEGNEMIQHIDEEYAEIWHARFKVLGMPVFYSPYLQFPIGDRRRSGLLIPNFHRSSKDGFAYSQPFYWNIAPNMDATITPTYYSRRGWQISPEYRYLTKLGEGIVAGEYIGKDRLDEYRPDDNNRKRYLMHWRHNMSFLTGWRLYVDYTKVSDKRYFSDFDSEYGSSTDGYATQQFKLGYYQPNYNLSISGKKFQTFDELDVGPYRVLPQIDFNYYNDELVKGGDFKLFAQTARFENDSKLMPKAWRFHVEPTLNFPLANRYGSLNFETKLYATHYLQEKGSSKQADDMDKNVTRIIPQVKVDLQTVLEADKQLFKGFNQTFEPRVQYVYRPYKDQSNIGSGLNQSVSFGYDSALLQSDYFSLFNDRRYSGLDRISSANLITAGGTNRFFNEKTGVEVFNFSIGQTYYLSPSKIDDLSQNSTTKRSSSWALESNWKFHRKWNWHGAYQYDTRLNQTSLANTSLQYKPSQDKLVQLSYRFASKDYINQNLRSNTYGQDIKQVGAVVGWELTDRVAFMASHYHDIALKKPVESQLSVNYNTCCWSANVYVARKLTATPIGSPDTINDLYYDNKFGVNFELRFGTNYSSGVRKMLKKGMIPYTEQYGIN</sequence>
<comment type="function">
    <text evidence="1">Together with LptE, is involved in the assembly of lipopolysaccharide (LPS) at the surface of the outer membrane.</text>
</comment>
<comment type="subunit">
    <text evidence="1">Component of the lipopolysaccharide transport and assembly complex. Interacts with LptE and LptA.</text>
</comment>
<comment type="subcellular location">
    <subcellularLocation>
        <location evidence="1">Cell outer membrane</location>
    </subcellularLocation>
</comment>
<comment type="similarity">
    <text evidence="1">Belongs to the LptD family.</text>
</comment>
<gene>
    <name evidence="1" type="primary">lptD</name>
    <name type="synonym">imp</name>
    <name type="synonym">ostA</name>
    <name type="ordered locus">APP7_1017</name>
</gene>
<reference key="1">
    <citation type="submission" date="2008-06" db="EMBL/GenBank/DDBJ databases">
        <title>Genome and proteome analysis of A. pleuropneumoniae serotype 7.</title>
        <authorList>
            <person name="Linke B."/>
            <person name="Buettner F."/>
            <person name="Martinez-Arias R."/>
            <person name="Goesmann A."/>
            <person name="Baltes N."/>
            <person name="Tegetmeyer H."/>
            <person name="Singh M."/>
            <person name="Gerlach G.F."/>
        </authorList>
    </citation>
    <scope>NUCLEOTIDE SEQUENCE [LARGE SCALE GENOMIC DNA]</scope>
    <source>
        <strain>AP76</strain>
    </source>
</reference>
<dbReference type="EMBL" id="CP001091">
    <property type="protein sequence ID" value="ACE61669.1"/>
    <property type="molecule type" value="Genomic_DNA"/>
</dbReference>
<dbReference type="RefSeq" id="WP_012478463.1">
    <property type="nucleotide sequence ID" value="NC_010939.1"/>
</dbReference>
<dbReference type="SMR" id="B3GXV4"/>
<dbReference type="KEGG" id="apa:APP7_1017"/>
<dbReference type="HOGENOM" id="CLU_009039_2_0_6"/>
<dbReference type="Proteomes" id="UP000001226">
    <property type="component" value="Chromosome"/>
</dbReference>
<dbReference type="GO" id="GO:0009279">
    <property type="term" value="C:cell outer membrane"/>
    <property type="evidence" value="ECO:0007669"/>
    <property type="project" value="UniProtKB-SubCell"/>
</dbReference>
<dbReference type="GO" id="GO:1990351">
    <property type="term" value="C:transporter complex"/>
    <property type="evidence" value="ECO:0007669"/>
    <property type="project" value="TreeGrafter"/>
</dbReference>
<dbReference type="GO" id="GO:0043165">
    <property type="term" value="P:Gram-negative-bacterium-type cell outer membrane assembly"/>
    <property type="evidence" value="ECO:0007669"/>
    <property type="project" value="UniProtKB-UniRule"/>
</dbReference>
<dbReference type="GO" id="GO:0015920">
    <property type="term" value="P:lipopolysaccharide transport"/>
    <property type="evidence" value="ECO:0007669"/>
    <property type="project" value="InterPro"/>
</dbReference>
<dbReference type="Gene3D" id="2.60.450.10">
    <property type="entry name" value="Lipopolysaccharide (LPS) transport protein A like domain"/>
    <property type="match status" value="1"/>
</dbReference>
<dbReference type="HAMAP" id="MF_01411">
    <property type="entry name" value="LPS_assembly_LptD"/>
    <property type="match status" value="1"/>
</dbReference>
<dbReference type="InterPro" id="IPR020889">
    <property type="entry name" value="LipoPS_assembly_LptD"/>
</dbReference>
<dbReference type="InterPro" id="IPR050218">
    <property type="entry name" value="LptD"/>
</dbReference>
<dbReference type="InterPro" id="IPR007543">
    <property type="entry name" value="LptD_C"/>
</dbReference>
<dbReference type="InterPro" id="IPR005653">
    <property type="entry name" value="OstA-like_N"/>
</dbReference>
<dbReference type="NCBIfam" id="NF002997">
    <property type="entry name" value="PRK03761.1"/>
    <property type="match status" value="1"/>
</dbReference>
<dbReference type="PANTHER" id="PTHR30189">
    <property type="entry name" value="LPS-ASSEMBLY PROTEIN"/>
    <property type="match status" value="1"/>
</dbReference>
<dbReference type="PANTHER" id="PTHR30189:SF1">
    <property type="entry name" value="LPS-ASSEMBLY PROTEIN LPTD"/>
    <property type="match status" value="1"/>
</dbReference>
<dbReference type="Pfam" id="PF04453">
    <property type="entry name" value="LptD"/>
    <property type="match status" value="1"/>
</dbReference>
<dbReference type="Pfam" id="PF03968">
    <property type="entry name" value="LptD_N"/>
    <property type="match status" value="1"/>
</dbReference>
<feature type="signal peptide" evidence="1">
    <location>
        <begin position="1"/>
        <end position="23"/>
    </location>
</feature>
<feature type="chain" id="PRO_1000145513" description="LPS-assembly protein LptD">
    <location>
        <begin position="24"/>
        <end position="778"/>
    </location>
</feature>
<name>LPTD_ACTP7</name>
<evidence type="ECO:0000255" key="1">
    <source>
        <dbReference type="HAMAP-Rule" id="MF_01411"/>
    </source>
</evidence>
<keyword id="KW-0998">Cell outer membrane</keyword>
<keyword id="KW-0472">Membrane</keyword>
<keyword id="KW-0732">Signal</keyword>
<proteinExistence type="inferred from homology"/>
<organism>
    <name type="scientific">Actinobacillus pleuropneumoniae serotype 7 (strain AP76)</name>
    <dbReference type="NCBI Taxonomy" id="537457"/>
    <lineage>
        <taxon>Bacteria</taxon>
        <taxon>Pseudomonadati</taxon>
        <taxon>Pseudomonadota</taxon>
        <taxon>Gammaproteobacteria</taxon>
        <taxon>Pasteurellales</taxon>
        <taxon>Pasteurellaceae</taxon>
        <taxon>Actinobacillus</taxon>
    </lineage>
</organism>
<protein>
    <recommendedName>
        <fullName evidence="1">LPS-assembly protein LptD</fullName>
    </recommendedName>
</protein>